<comment type="function">
    <text evidence="1">Part of the Sec protein translocase complex. Interacts with the SecYEG preprotein conducting channel. SecDF uses the proton motive force (PMF) to complete protein translocation after the ATP-dependent function of SecA.</text>
</comment>
<comment type="subunit">
    <text evidence="1">Forms a complex with SecF. Part of the essential Sec protein translocation apparatus which comprises SecA, SecYEG and auxiliary proteins SecDF. Other proteins may also be involved.</text>
</comment>
<comment type="subcellular location">
    <subcellularLocation>
        <location evidence="1">Cell inner membrane</location>
        <topology evidence="1">Multi-pass membrane protein</topology>
    </subcellularLocation>
</comment>
<comment type="similarity">
    <text evidence="1">Belongs to the SecD/SecF family. SecD subfamily.</text>
</comment>
<proteinExistence type="inferred from homology"/>
<accession>B8E2N3</accession>
<organism>
    <name type="scientific">Dictyoglomus turgidum (strain DSM 6724 / Z-1310)</name>
    <dbReference type="NCBI Taxonomy" id="515635"/>
    <lineage>
        <taxon>Bacteria</taxon>
        <taxon>Pseudomonadati</taxon>
        <taxon>Dictyoglomota</taxon>
        <taxon>Dictyoglomia</taxon>
        <taxon>Dictyoglomales</taxon>
        <taxon>Dictyoglomaceae</taxon>
        <taxon>Dictyoglomus</taxon>
    </lineage>
</organism>
<sequence length="399" mass="43438">MNIRPEIKTAFIVIILGIAIWILLTFPFRYGLDIRGGIRVTLQCQKTEGVEITDDAVRRTIEVIRNRIDQLGVTEPSIYKEGSDKIVVELPGIKDPERALEIIGQTALLEFKDETGKTILTGSALKNAKVEFDQVGQPMVRVEMNPEGAKIFADFTSKNVGKQVFIVLDGKVISNPVIKEPITEGTGVITGRFTIDEAQKLAILLRAGALPVPVKVIENRTIDPTLGKDTMESAYRAGVIGAILVVLFMILVFRFLGLVADIALLIYVVLDLAALKLLNATLTLPGVAGIILSIGMAVDANCLIFARMKEEYAQRKTPMASLDAGFRNALRAIIDSNVTTILAALILFYFGTGPIRGFAVTLSLGVALSMFTQITITRTLLENLLSLPVFKKATKLLGL</sequence>
<evidence type="ECO:0000255" key="1">
    <source>
        <dbReference type="HAMAP-Rule" id="MF_01463"/>
    </source>
</evidence>
<name>SECD_DICTD</name>
<gene>
    <name evidence="1" type="primary">secD</name>
    <name type="ordered locus">Dtur_1604</name>
</gene>
<feature type="chain" id="PRO_0000412676" description="Protein translocase subunit SecD">
    <location>
        <begin position="1"/>
        <end position="399"/>
    </location>
</feature>
<feature type="transmembrane region" description="Helical" evidence="1">
    <location>
        <begin position="7"/>
        <end position="27"/>
    </location>
</feature>
<feature type="transmembrane region" description="Helical" evidence="1">
    <location>
        <begin position="239"/>
        <end position="259"/>
    </location>
</feature>
<feature type="transmembrane region" description="Helical" evidence="1">
    <location>
        <begin position="262"/>
        <end position="282"/>
    </location>
</feature>
<feature type="transmembrane region" description="Helical" evidence="1">
    <location>
        <begin position="286"/>
        <end position="306"/>
    </location>
</feature>
<feature type="transmembrane region" description="Helical" evidence="1">
    <location>
        <begin position="329"/>
        <end position="351"/>
    </location>
</feature>
<feature type="transmembrane region" description="Helical" evidence="1">
    <location>
        <begin position="357"/>
        <end position="381"/>
    </location>
</feature>
<keyword id="KW-0997">Cell inner membrane</keyword>
<keyword id="KW-1003">Cell membrane</keyword>
<keyword id="KW-0472">Membrane</keyword>
<keyword id="KW-0653">Protein transport</keyword>
<keyword id="KW-1185">Reference proteome</keyword>
<keyword id="KW-0811">Translocation</keyword>
<keyword id="KW-0812">Transmembrane</keyword>
<keyword id="KW-1133">Transmembrane helix</keyword>
<keyword id="KW-0813">Transport</keyword>
<protein>
    <recommendedName>
        <fullName evidence="1">Protein translocase subunit SecD</fullName>
    </recommendedName>
</protein>
<reference key="1">
    <citation type="journal article" date="2016" name="Front. Microbiol.">
        <title>The complete genome sequence of hyperthermophile Dictyoglomus turgidum DSM 6724 reveals a specialized carbohydrate fermentor.</title>
        <authorList>
            <person name="Brumm P.J."/>
            <person name="Gowda K."/>
            <person name="Robb F.T."/>
            <person name="Mead D.A."/>
        </authorList>
    </citation>
    <scope>NUCLEOTIDE SEQUENCE [LARGE SCALE GENOMIC DNA]</scope>
    <source>
        <strain>DSM 6724 / Z-1310</strain>
    </source>
</reference>
<dbReference type="EMBL" id="CP001251">
    <property type="protein sequence ID" value="ACK42877.1"/>
    <property type="molecule type" value="Genomic_DNA"/>
</dbReference>
<dbReference type="RefSeq" id="WP_012583952.1">
    <property type="nucleotide sequence ID" value="NC_011661.1"/>
</dbReference>
<dbReference type="RefSeq" id="YP_002353491.1">
    <property type="nucleotide sequence ID" value="NC_011661.1"/>
</dbReference>
<dbReference type="SMR" id="B8E2N3"/>
<dbReference type="FunCoup" id="B8E2N3">
    <property type="interactions" value="121"/>
</dbReference>
<dbReference type="STRING" id="515635.Dtur_1604"/>
<dbReference type="EnsemblBacteria" id="ACK42877">
    <property type="protein sequence ID" value="ACK42877"/>
    <property type="gene ID" value="Dtur_1604"/>
</dbReference>
<dbReference type="KEGG" id="dtu:Dtur_1604"/>
<dbReference type="PATRIC" id="fig|515635.4.peg.1653"/>
<dbReference type="eggNOG" id="COG0342">
    <property type="taxonomic scope" value="Bacteria"/>
</dbReference>
<dbReference type="HOGENOM" id="CLU_007894_4_2_0"/>
<dbReference type="InParanoid" id="B8E2N3"/>
<dbReference type="OrthoDB" id="9805019at2"/>
<dbReference type="Proteomes" id="UP000007719">
    <property type="component" value="Chromosome"/>
</dbReference>
<dbReference type="GO" id="GO:0005886">
    <property type="term" value="C:plasma membrane"/>
    <property type="evidence" value="ECO:0000318"/>
    <property type="project" value="GO_Central"/>
</dbReference>
<dbReference type="GO" id="GO:0015450">
    <property type="term" value="F:protein-transporting ATPase activity"/>
    <property type="evidence" value="ECO:0007669"/>
    <property type="project" value="InterPro"/>
</dbReference>
<dbReference type="GO" id="GO:0065002">
    <property type="term" value="P:intracellular protein transmembrane transport"/>
    <property type="evidence" value="ECO:0007669"/>
    <property type="project" value="UniProtKB-UniRule"/>
</dbReference>
<dbReference type="GO" id="GO:0006605">
    <property type="term" value="P:protein targeting"/>
    <property type="evidence" value="ECO:0007669"/>
    <property type="project" value="UniProtKB-UniRule"/>
</dbReference>
<dbReference type="GO" id="GO:0015031">
    <property type="term" value="P:protein transport"/>
    <property type="evidence" value="ECO:0000318"/>
    <property type="project" value="GO_Central"/>
</dbReference>
<dbReference type="GO" id="GO:0043952">
    <property type="term" value="P:protein transport by the Sec complex"/>
    <property type="evidence" value="ECO:0007669"/>
    <property type="project" value="UniProtKB-UniRule"/>
</dbReference>
<dbReference type="FunFam" id="1.20.1640.10:FF:000004">
    <property type="entry name" value="Protein translocase subunit SecD"/>
    <property type="match status" value="1"/>
</dbReference>
<dbReference type="Gene3D" id="3.30.70.3220">
    <property type="match status" value="1"/>
</dbReference>
<dbReference type="Gene3D" id="1.20.1640.10">
    <property type="entry name" value="Multidrug efflux transporter AcrB transmembrane domain"/>
    <property type="match status" value="1"/>
</dbReference>
<dbReference type="HAMAP" id="MF_01463_B">
    <property type="entry name" value="SecD_B"/>
    <property type="match status" value="1"/>
</dbReference>
<dbReference type="InterPro" id="IPR005791">
    <property type="entry name" value="SecD"/>
</dbReference>
<dbReference type="InterPro" id="IPR022813">
    <property type="entry name" value="SecD/SecF_arch_bac"/>
</dbReference>
<dbReference type="InterPro" id="IPR022646">
    <property type="entry name" value="SecD/SecF_CS"/>
</dbReference>
<dbReference type="InterPro" id="IPR048631">
    <property type="entry name" value="SecD_1st"/>
</dbReference>
<dbReference type="InterPro" id="IPR048634">
    <property type="entry name" value="SecD_SecF_C"/>
</dbReference>
<dbReference type="InterPro" id="IPR055344">
    <property type="entry name" value="SecD_SecF_C_bact"/>
</dbReference>
<dbReference type="InterPro" id="IPR054384">
    <property type="entry name" value="SecDF_P1_head"/>
</dbReference>
<dbReference type="NCBIfam" id="TIGR00916">
    <property type="entry name" value="2A0604s01"/>
    <property type="match status" value="1"/>
</dbReference>
<dbReference type="NCBIfam" id="TIGR01129">
    <property type="entry name" value="secD"/>
    <property type="match status" value="1"/>
</dbReference>
<dbReference type="PANTHER" id="PTHR30081:SF1">
    <property type="entry name" value="PROTEIN TRANSLOCASE SUBUNIT SECD"/>
    <property type="match status" value="1"/>
</dbReference>
<dbReference type="PANTHER" id="PTHR30081">
    <property type="entry name" value="PROTEIN-EXPORT MEMBRANE PROTEIN SEC"/>
    <property type="match status" value="1"/>
</dbReference>
<dbReference type="Pfam" id="PF07549">
    <property type="entry name" value="Sec_GG"/>
    <property type="match status" value="1"/>
</dbReference>
<dbReference type="Pfam" id="PF21760">
    <property type="entry name" value="SecD_1st"/>
    <property type="match status" value="1"/>
</dbReference>
<dbReference type="Pfam" id="PF02355">
    <property type="entry name" value="SecD_SecF_C"/>
    <property type="match status" value="1"/>
</dbReference>
<dbReference type="Pfam" id="PF22599">
    <property type="entry name" value="SecDF_P1_head"/>
    <property type="match status" value="1"/>
</dbReference>
<dbReference type="SUPFAM" id="SSF82866">
    <property type="entry name" value="Multidrug efflux transporter AcrB transmembrane domain"/>
    <property type="match status" value="1"/>
</dbReference>